<sequence length="375" mass="42815">MEMQQNCSISCFWETQPLGCVKISCIFYHSKPRNINGLFLPPSSNIILQKETQEGIPPPTQSQEPLKPQENISRPIHHPLVLKTNFEEEEEEEGEQNDASSLWTKTPEEIEEKRAIKEMCYKSGEYYRVHTPSDISSSKSIASIVEKEIEKSLESGSELQEGDGLTVPTKFSLFERQGEIKASLDRKPRTDIAAFENGGGDCYVPQRIIFLGVDENEVLTEEKESTISKCSNAKVNDVHPVMKPHFKGVKKRKWIYDEPKNFPEPGMQRVQASNPKNKMSYHRNNKNKNSENASYIHVQRDAVRTVSLNAPPHGRPPHGSYNKADVNKEPKFKLCSDKYMSTSYNGSAWQKRIPFSKTYSKNEKIYTEPRRNGSK</sequence>
<evidence type="ECO:0000256" key="1">
    <source>
        <dbReference type="SAM" id="MobiDB-lite"/>
    </source>
</evidence>
<evidence type="ECO:0000305" key="2"/>
<keyword id="KW-1185">Reference proteome</keyword>
<feature type="chain" id="PRO_0000295233" description="Uncharacterized protein C12orf50 homolog">
    <location>
        <begin position="1"/>
        <end position="375"/>
    </location>
</feature>
<feature type="region of interest" description="Disordered" evidence="1">
    <location>
        <begin position="54"/>
        <end position="78"/>
    </location>
</feature>
<accession>Q32KY7</accession>
<dbReference type="EMBL" id="BC109852">
    <property type="protein sequence ID" value="AAI09853.1"/>
    <property type="status" value="ALT_FRAME"/>
    <property type="molecule type" value="mRNA"/>
</dbReference>
<dbReference type="RefSeq" id="NP_001033292.1">
    <property type="nucleotide sequence ID" value="NM_001038203.1"/>
</dbReference>
<dbReference type="FunCoup" id="Q32KY7">
    <property type="interactions" value="60"/>
</dbReference>
<dbReference type="STRING" id="9913.ENSBTAP00000045043"/>
<dbReference type="PaxDb" id="9913-ENSBTAP00000045043"/>
<dbReference type="GeneID" id="614818"/>
<dbReference type="KEGG" id="bta:614818"/>
<dbReference type="CTD" id="614818"/>
<dbReference type="eggNOG" id="KOG4791">
    <property type="taxonomic scope" value="Eukaryota"/>
</dbReference>
<dbReference type="InParanoid" id="Q32KY7"/>
<dbReference type="OrthoDB" id="5395350at2759"/>
<dbReference type="Proteomes" id="UP000009136">
    <property type="component" value="Unplaced"/>
</dbReference>
<dbReference type="GO" id="GO:0016973">
    <property type="term" value="P:poly(A)+ mRNA export from nucleus"/>
    <property type="evidence" value="ECO:0000318"/>
    <property type="project" value="GO_Central"/>
</dbReference>
<dbReference type="InterPro" id="IPR040943">
    <property type="entry name" value="DUF5571"/>
</dbReference>
<dbReference type="InterPro" id="IPR041686">
    <property type="entry name" value="Znf-CCCH_3"/>
</dbReference>
<dbReference type="PANTHER" id="PTHR15725:SF1">
    <property type="entry name" value="RIKEN CDNA 1700017N19 GENE"/>
    <property type="match status" value="1"/>
</dbReference>
<dbReference type="PANTHER" id="PTHR15725">
    <property type="entry name" value="ZN-FINGER, C-X8-C-X5-C-X3-H TYPE-CONTAINING"/>
    <property type="match status" value="1"/>
</dbReference>
<dbReference type="Pfam" id="PF17732">
    <property type="entry name" value="DUF5571"/>
    <property type="match status" value="2"/>
</dbReference>
<dbReference type="Pfam" id="PF15663">
    <property type="entry name" value="zf-CCCH_3"/>
    <property type="match status" value="1"/>
</dbReference>
<name>CL050_BOVIN</name>
<reference key="1">
    <citation type="submission" date="2005-11" db="EMBL/GenBank/DDBJ databases">
        <authorList>
            <consortium name="NIH - Mammalian Gene Collection (MGC) project"/>
        </authorList>
    </citation>
    <scope>NUCLEOTIDE SEQUENCE [LARGE SCALE MRNA]</scope>
    <source>
        <strain>Crossbred X Angus</strain>
        <tissue>Liver</tissue>
    </source>
</reference>
<comment type="sequence caution" evidence="2">
    <conflict type="frameshift">
        <sequence resource="EMBL-CDS" id="AAI09853"/>
    </conflict>
</comment>
<organism>
    <name type="scientific">Bos taurus</name>
    <name type="common">Bovine</name>
    <dbReference type="NCBI Taxonomy" id="9913"/>
    <lineage>
        <taxon>Eukaryota</taxon>
        <taxon>Metazoa</taxon>
        <taxon>Chordata</taxon>
        <taxon>Craniata</taxon>
        <taxon>Vertebrata</taxon>
        <taxon>Euteleostomi</taxon>
        <taxon>Mammalia</taxon>
        <taxon>Eutheria</taxon>
        <taxon>Laurasiatheria</taxon>
        <taxon>Artiodactyla</taxon>
        <taxon>Ruminantia</taxon>
        <taxon>Pecora</taxon>
        <taxon>Bovidae</taxon>
        <taxon>Bovinae</taxon>
        <taxon>Bos</taxon>
    </lineage>
</organism>
<proteinExistence type="evidence at transcript level"/>
<protein>
    <recommendedName>
        <fullName>Uncharacterized protein C12orf50 homolog</fullName>
    </recommendedName>
</protein>